<feature type="chain" id="PRO_0000201238" description="Putative bolA-like protein K11H12.1">
    <location>
        <begin position="1"/>
        <end position="108"/>
    </location>
</feature>
<feature type="region of interest" description="Disordered" evidence="1">
    <location>
        <begin position="89"/>
        <end position="108"/>
    </location>
</feature>
<dbReference type="EMBL" id="FO081353">
    <property type="protein sequence ID" value="CCD70970.1"/>
    <property type="molecule type" value="Genomic_DNA"/>
</dbReference>
<dbReference type="PIR" id="T34436">
    <property type="entry name" value="T34436"/>
</dbReference>
<dbReference type="RefSeq" id="NP_499963.1">
    <property type="nucleotide sequence ID" value="NM_067562.6"/>
</dbReference>
<dbReference type="SMR" id="P91375"/>
<dbReference type="BioGRID" id="42051">
    <property type="interactions" value="5"/>
</dbReference>
<dbReference type="FunCoup" id="P91375">
    <property type="interactions" value="1048"/>
</dbReference>
<dbReference type="STRING" id="6239.K11H12.1.1"/>
<dbReference type="PaxDb" id="6239-K11H12.1"/>
<dbReference type="PeptideAtlas" id="P91375"/>
<dbReference type="EnsemblMetazoa" id="K11H12.1.1">
    <property type="protein sequence ID" value="K11H12.1.1"/>
    <property type="gene ID" value="WBGene00019658"/>
</dbReference>
<dbReference type="GeneID" id="176890"/>
<dbReference type="KEGG" id="cel:CELE_K11H12.1"/>
<dbReference type="UCSC" id="K11H12.1">
    <property type="organism name" value="c. elegans"/>
</dbReference>
<dbReference type="AGR" id="WB:WBGene00019658"/>
<dbReference type="CTD" id="176890"/>
<dbReference type="WormBase" id="K11H12.1">
    <property type="protein sequence ID" value="CE12146"/>
    <property type="gene ID" value="WBGene00019658"/>
</dbReference>
<dbReference type="eggNOG" id="KOG2313">
    <property type="taxonomic scope" value="Eukaryota"/>
</dbReference>
<dbReference type="GeneTree" id="ENSGT00510000048165"/>
<dbReference type="HOGENOM" id="CLU_109462_3_0_1"/>
<dbReference type="InParanoid" id="P91375"/>
<dbReference type="OMA" id="CLGGFGK"/>
<dbReference type="OrthoDB" id="4983at2759"/>
<dbReference type="PhylomeDB" id="P91375"/>
<dbReference type="PRO" id="PR:P91375"/>
<dbReference type="Proteomes" id="UP000001940">
    <property type="component" value="Chromosome IV"/>
</dbReference>
<dbReference type="Bgee" id="WBGene00019658">
    <property type="expression patterns" value="Expressed in germ line (C elegans) and 4 other cell types or tissues"/>
</dbReference>
<dbReference type="GO" id="GO:0005739">
    <property type="term" value="C:mitochondrion"/>
    <property type="evidence" value="ECO:0000318"/>
    <property type="project" value="GO_Central"/>
</dbReference>
<dbReference type="FunFam" id="3.30.300.90:FF:000001">
    <property type="entry name" value="Transcriptional regulator BolA"/>
    <property type="match status" value="1"/>
</dbReference>
<dbReference type="Gene3D" id="3.30.300.90">
    <property type="entry name" value="BolA-like"/>
    <property type="match status" value="1"/>
</dbReference>
<dbReference type="InterPro" id="IPR002634">
    <property type="entry name" value="BolA"/>
</dbReference>
<dbReference type="InterPro" id="IPR036065">
    <property type="entry name" value="BolA-like_sf"/>
</dbReference>
<dbReference type="InterPro" id="IPR050961">
    <property type="entry name" value="BolA/IbaG_stress_morph_reg"/>
</dbReference>
<dbReference type="PANTHER" id="PTHR46229">
    <property type="entry name" value="BOLA TRANSCRIPTION REGULATOR"/>
    <property type="match status" value="1"/>
</dbReference>
<dbReference type="PANTHER" id="PTHR46229:SF2">
    <property type="entry name" value="BOLA-LIKE PROTEIN 1"/>
    <property type="match status" value="1"/>
</dbReference>
<dbReference type="Pfam" id="PF01722">
    <property type="entry name" value="BolA"/>
    <property type="match status" value="1"/>
</dbReference>
<dbReference type="PIRSF" id="PIRSF003113">
    <property type="entry name" value="BolA"/>
    <property type="match status" value="1"/>
</dbReference>
<dbReference type="SUPFAM" id="SSF82657">
    <property type="entry name" value="BolA-like"/>
    <property type="match status" value="1"/>
</dbReference>
<proteinExistence type="inferred from homology"/>
<keyword id="KW-1185">Reference proteome</keyword>
<evidence type="ECO:0000256" key="1">
    <source>
        <dbReference type="SAM" id="MobiDB-lite"/>
    </source>
</evidence>
<evidence type="ECO:0000305" key="2"/>
<reference key="1">
    <citation type="journal article" date="1998" name="Science">
        <title>Genome sequence of the nematode C. elegans: a platform for investigating biology.</title>
        <authorList>
            <consortium name="The C. elegans sequencing consortium"/>
        </authorList>
    </citation>
    <scope>NUCLEOTIDE SEQUENCE [LARGE SCALE GENOMIC DNA]</scope>
    <source>
        <strain>Bristol N2</strain>
    </source>
</reference>
<accession>P91375</accession>
<sequence length="108" mass="12146">MSTLSEGPVARLLKEKLFAAFQPKHLEVECESHLHNVPKGAEKHFRVQVVSDEFEGKRVIERHRLVNTCLAKELATTVHALRIDAIPTSKWDGQKQEDSPTCRGGFGK</sequence>
<name>YN1I_CAEEL</name>
<organism>
    <name type="scientific">Caenorhabditis elegans</name>
    <dbReference type="NCBI Taxonomy" id="6239"/>
    <lineage>
        <taxon>Eukaryota</taxon>
        <taxon>Metazoa</taxon>
        <taxon>Ecdysozoa</taxon>
        <taxon>Nematoda</taxon>
        <taxon>Chromadorea</taxon>
        <taxon>Rhabditida</taxon>
        <taxon>Rhabditina</taxon>
        <taxon>Rhabditomorpha</taxon>
        <taxon>Rhabditoidea</taxon>
        <taxon>Rhabditidae</taxon>
        <taxon>Peloderinae</taxon>
        <taxon>Caenorhabditis</taxon>
    </lineage>
</organism>
<protein>
    <recommendedName>
        <fullName>Putative bolA-like protein K11H12.1</fullName>
    </recommendedName>
</protein>
<comment type="similarity">
    <text evidence="2">Belongs to the BolA/IbaG family.</text>
</comment>
<gene>
    <name type="ORF">K11H12.1</name>
</gene>